<reference key="1">
    <citation type="submission" date="2008-04" db="EMBL/GenBank/DDBJ databases">
        <title>Complete sequence of chromosome 1 of Burkholderia ambifaria MC40-6.</title>
        <authorList>
            <person name="Copeland A."/>
            <person name="Lucas S."/>
            <person name="Lapidus A."/>
            <person name="Glavina del Rio T."/>
            <person name="Dalin E."/>
            <person name="Tice H."/>
            <person name="Pitluck S."/>
            <person name="Chain P."/>
            <person name="Malfatti S."/>
            <person name="Shin M."/>
            <person name="Vergez L."/>
            <person name="Lang D."/>
            <person name="Schmutz J."/>
            <person name="Larimer F."/>
            <person name="Land M."/>
            <person name="Hauser L."/>
            <person name="Kyrpides N."/>
            <person name="Lykidis A."/>
            <person name="Ramette A."/>
            <person name="Konstantinidis K."/>
            <person name="Tiedje J."/>
            <person name="Richardson P."/>
        </authorList>
    </citation>
    <scope>NUCLEOTIDE SEQUENCE [LARGE SCALE GENOMIC DNA]</scope>
    <source>
        <strain>MC40-6</strain>
    </source>
</reference>
<evidence type="ECO:0000255" key="1">
    <source>
        <dbReference type="HAMAP-Rule" id="MF_01810"/>
    </source>
</evidence>
<organism>
    <name type="scientific">Burkholderia ambifaria (strain MC40-6)</name>
    <dbReference type="NCBI Taxonomy" id="398577"/>
    <lineage>
        <taxon>Bacteria</taxon>
        <taxon>Pseudomonadati</taxon>
        <taxon>Pseudomonadota</taxon>
        <taxon>Betaproteobacteria</taxon>
        <taxon>Burkholderiales</taxon>
        <taxon>Burkholderiaceae</taxon>
        <taxon>Burkholderia</taxon>
        <taxon>Burkholderia cepacia complex</taxon>
    </lineage>
</organism>
<keyword id="KW-0997">Cell inner membrane</keyword>
<keyword id="KW-1003">Cell membrane</keyword>
<keyword id="KW-0143">Chaperone</keyword>
<keyword id="KW-0472">Membrane</keyword>
<keyword id="KW-0653">Protein transport</keyword>
<keyword id="KW-0812">Transmembrane</keyword>
<keyword id="KW-1133">Transmembrane helix</keyword>
<keyword id="KW-0813">Transport</keyword>
<protein>
    <recommendedName>
        <fullName evidence="1">Membrane protein insertase YidC</fullName>
    </recommendedName>
    <alternativeName>
        <fullName evidence="1">Foldase YidC</fullName>
    </alternativeName>
    <alternativeName>
        <fullName evidence="1">Membrane integrase YidC</fullName>
    </alternativeName>
    <alternativeName>
        <fullName evidence="1">Membrane protein YidC</fullName>
    </alternativeName>
</protein>
<comment type="function">
    <text evidence="1">Required for the insertion and/or proper folding and/or complex formation of integral membrane proteins into the membrane. Involved in integration of membrane proteins that insert both dependently and independently of the Sec translocase complex, as well as at least some lipoproteins. Aids folding of multispanning membrane proteins.</text>
</comment>
<comment type="subunit">
    <text evidence="1">Interacts with the Sec translocase complex via SecD. Specifically interacts with transmembrane segments of nascent integral membrane proteins during membrane integration.</text>
</comment>
<comment type="subcellular location">
    <subcellularLocation>
        <location evidence="1">Cell inner membrane</location>
        <topology evidence="1">Multi-pass membrane protein</topology>
    </subcellularLocation>
</comment>
<comment type="similarity">
    <text evidence="1">Belongs to the OXA1/ALB3/YidC family. Type 1 subfamily.</text>
</comment>
<accession>B1YQJ7</accession>
<sequence>MDIKRTVLWVIFFMSAVMLYDNWQRSHGRPSMFFPSATQTAPAAAGGASGTGATTTTAGEVPAAAAGTAPSTTAPAAQAQLVKFSTDVYDGEIDTRGGTLAKLTLKKQGDGKQPDLYITLFDHTAGHTYLARTGLLGGDFPNHNDVYTQVNAGPTSLTGDQNALKLSFESPVKGGVKVVKTYTFTRGSYVIGVDTKIDNVGTAPVTPTVYMELVRDNTAVETPMFSHTFLGPAVYTDAKHFQKIDFSDLDKNKANFEKAADNGWVAMVQHYFASAWIPQQGAKRDIYAEKIDPALYRVGVKQPVAAIAPGQSADVQARLFAGPEEERMLEGIAPGLELVKDYGWVTIIAKPLFWLLEKIHGFVGNWGWAIVLLTVLIKAVFFPLSAASYKSMARMKEITPRMQALRERFKSDPQKMNAALMELYKTEKVNPFGGCLPVVIQIPVFISLYWVLLASVEMRGAPWILWIHDLSQRDPFFILPVLMAVSMFVQTSLNPTPPDPVQAKMMKFMPIAFSVMFFFFPAGLVLYYVVNNVLSIAQQYYITRKLGGVKKKPA</sequence>
<dbReference type="EMBL" id="CP001025">
    <property type="protein sequence ID" value="ACB65574.1"/>
    <property type="molecule type" value="Genomic_DNA"/>
</dbReference>
<dbReference type="RefSeq" id="WP_012365026.1">
    <property type="nucleotide sequence ID" value="NC_010551.1"/>
</dbReference>
<dbReference type="SMR" id="B1YQJ7"/>
<dbReference type="KEGG" id="bac:BamMC406_3099"/>
<dbReference type="HOGENOM" id="CLU_016535_3_0_4"/>
<dbReference type="OrthoDB" id="9780552at2"/>
<dbReference type="Proteomes" id="UP000001680">
    <property type="component" value="Chromosome 1"/>
</dbReference>
<dbReference type="GO" id="GO:0005886">
    <property type="term" value="C:plasma membrane"/>
    <property type="evidence" value="ECO:0007669"/>
    <property type="project" value="UniProtKB-SubCell"/>
</dbReference>
<dbReference type="GO" id="GO:0032977">
    <property type="term" value="F:membrane insertase activity"/>
    <property type="evidence" value="ECO:0007669"/>
    <property type="project" value="InterPro"/>
</dbReference>
<dbReference type="GO" id="GO:0051205">
    <property type="term" value="P:protein insertion into membrane"/>
    <property type="evidence" value="ECO:0007669"/>
    <property type="project" value="TreeGrafter"/>
</dbReference>
<dbReference type="GO" id="GO:0015031">
    <property type="term" value="P:protein transport"/>
    <property type="evidence" value="ECO:0007669"/>
    <property type="project" value="UniProtKB-KW"/>
</dbReference>
<dbReference type="CDD" id="cd20070">
    <property type="entry name" value="5TM_YidC_Alb3"/>
    <property type="match status" value="1"/>
</dbReference>
<dbReference type="CDD" id="cd19961">
    <property type="entry name" value="EcYidC-like_peri"/>
    <property type="match status" value="1"/>
</dbReference>
<dbReference type="Gene3D" id="2.70.98.90">
    <property type="match status" value="1"/>
</dbReference>
<dbReference type="HAMAP" id="MF_01810">
    <property type="entry name" value="YidC_type1"/>
    <property type="match status" value="1"/>
</dbReference>
<dbReference type="InterPro" id="IPR019998">
    <property type="entry name" value="Membr_insert_YidC"/>
</dbReference>
<dbReference type="InterPro" id="IPR028053">
    <property type="entry name" value="Membr_insert_YidC_N"/>
</dbReference>
<dbReference type="InterPro" id="IPR001708">
    <property type="entry name" value="YidC/ALB3/OXA1/COX18"/>
</dbReference>
<dbReference type="InterPro" id="IPR028055">
    <property type="entry name" value="YidC/Oxa/ALB_C"/>
</dbReference>
<dbReference type="InterPro" id="IPR047196">
    <property type="entry name" value="YidC_ALB_C"/>
</dbReference>
<dbReference type="InterPro" id="IPR038221">
    <property type="entry name" value="YidC_periplasmic_sf"/>
</dbReference>
<dbReference type="NCBIfam" id="NF002352">
    <property type="entry name" value="PRK01318.1-3"/>
    <property type="match status" value="1"/>
</dbReference>
<dbReference type="NCBIfam" id="NF002353">
    <property type="entry name" value="PRK01318.1-4"/>
    <property type="match status" value="1"/>
</dbReference>
<dbReference type="NCBIfam" id="TIGR03593">
    <property type="entry name" value="yidC_nterm"/>
    <property type="match status" value="1"/>
</dbReference>
<dbReference type="NCBIfam" id="TIGR03592">
    <property type="entry name" value="yidC_oxa1_cterm"/>
    <property type="match status" value="1"/>
</dbReference>
<dbReference type="PANTHER" id="PTHR12428:SF65">
    <property type="entry name" value="CYTOCHROME C OXIDASE ASSEMBLY PROTEIN COX18, MITOCHONDRIAL"/>
    <property type="match status" value="1"/>
</dbReference>
<dbReference type="PANTHER" id="PTHR12428">
    <property type="entry name" value="OXA1"/>
    <property type="match status" value="1"/>
</dbReference>
<dbReference type="Pfam" id="PF02096">
    <property type="entry name" value="60KD_IMP"/>
    <property type="match status" value="1"/>
</dbReference>
<dbReference type="Pfam" id="PF14849">
    <property type="entry name" value="YidC_periplas"/>
    <property type="match status" value="1"/>
</dbReference>
<dbReference type="PRINTS" id="PR00701">
    <property type="entry name" value="60KDINNERMP"/>
</dbReference>
<dbReference type="PRINTS" id="PR01900">
    <property type="entry name" value="YIDCPROTEIN"/>
</dbReference>
<proteinExistence type="inferred from homology"/>
<feature type="chain" id="PRO_1000187639" description="Membrane protein insertase YidC">
    <location>
        <begin position="1"/>
        <end position="554"/>
    </location>
</feature>
<feature type="transmembrane region" description="Helical" evidence="1">
    <location>
        <begin position="7"/>
        <end position="24"/>
    </location>
</feature>
<feature type="transmembrane region" description="Helical" evidence="1">
    <location>
        <begin position="362"/>
        <end position="382"/>
    </location>
</feature>
<feature type="transmembrane region" description="Helical" evidence="1">
    <location>
        <begin position="436"/>
        <end position="456"/>
    </location>
</feature>
<feature type="transmembrane region" description="Helical" evidence="1">
    <location>
        <begin position="475"/>
        <end position="495"/>
    </location>
</feature>
<feature type="transmembrane region" description="Helical" evidence="1">
    <location>
        <begin position="510"/>
        <end position="530"/>
    </location>
</feature>
<name>YIDC_BURA4</name>
<gene>
    <name evidence="1" type="primary">yidC</name>
    <name type="ordered locus">BamMC406_3099</name>
</gene>